<accession>C1AG13</accession>
<organism>
    <name type="scientific">Mycobacterium bovis (strain BCG / Tokyo 172 / ATCC 35737 / TMC 1019)</name>
    <dbReference type="NCBI Taxonomy" id="561275"/>
    <lineage>
        <taxon>Bacteria</taxon>
        <taxon>Bacillati</taxon>
        <taxon>Actinomycetota</taxon>
        <taxon>Actinomycetes</taxon>
        <taxon>Mycobacteriales</taxon>
        <taxon>Mycobacteriaceae</taxon>
        <taxon>Mycobacterium</taxon>
        <taxon>Mycobacterium tuberculosis complex</taxon>
    </lineage>
</organism>
<name>Y2914_MYCBT</name>
<evidence type="ECO:0000255" key="1">
    <source>
        <dbReference type="HAMAP-Rule" id="MF_00048"/>
    </source>
</evidence>
<reference key="1">
    <citation type="journal article" date="2009" name="Vaccine">
        <title>Whole genome sequence analysis of Mycobacterium bovis bacillus Calmette-Guerin (BCG) Tokyo 172: a comparative study of BCG vaccine substrains.</title>
        <authorList>
            <person name="Seki M."/>
            <person name="Honda I."/>
            <person name="Fujita I."/>
            <person name="Yano I."/>
            <person name="Yamamoto S."/>
            <person name="Koyama A."/>
        </authorList>
    </citation>
    <scope>NUCLEOTIDE SEQUENCE [LARGE SCALE GENOMIC DNA]</scope>
    <source>
        <strain>BCG / Tokyo 172 / ATCC 35737 / TMC 1019</strain>
    </source>
</reference>
<protein>
    <recommendedName>
        <fullName evidence="1">UPF0102 protein JTY_2914</fullName>
    </recommendedName>
</protein>
<sequence>MTTLKTMTRVQLGAMGEALAVDYLTSMGLRILNRNWRCRYGELDVIACDAATRTVVFVEVKTRTGDGYGGLAHAVTERKVRRLRRLAGLWLADQEERWAAVRIDVIGVRVGPKNSGRTPELTHLQGIG</sequence>
<dbReference type="EMBL" id="AP010918">
    <property type="protein sequence ID" value="BAH27192.1"/>
    <property type="molecule type" value="Genomic_DNA"/>
</dbReference>
<dbReference type="RefSeq" id="WP_003414702.1">
    <property type="nucleotide sequence ID" value="NZ_CP014566.1"/>
</dbReference>
<dbReference type="SMR" id="C1AG13"/>
<dbReference type="KEGG" id="mbt:JTY_2914"/>
<dbReference type="HOGENOM" id="CLU_115353_2_3_11"/>
<dbReference type="GO" id="GO:0003676">
    <property type="term" value="F:nucleic acid binding"/>
    <property type="evidence" value="ECO:0007669"/>
    <property type="project" value="InterPro"/>
</dbReference>
<dbReference type="CDD" id="cd20736">
    <property type="entry name" value="PoNe_Nuclease"/>
    <property type="match status" value="1"/>
</dbReference>
<dbReference type="Gene3D" id="3.40.1350.10">
    <property type="match status" value="1"/>
</dbReference>
<dbReference type="HAMAP" id="MF_00048">
    <property type="entry name" value="UPF0102"/>
    <property type="match status" value="1"/>
</dbReference>
<dbReference type="InterPro" id="IPR011335">
    <property type="entry name" value="Restrct_endonuc-II-like"/>
</dbReference>
<dbReference type="InterPro" id="IPR011856">
    <property type="entry name" value="tRNA_endonuc-like_dom_sf"/>
</dbReference>
<dbReference type="InterPro" id="IPR003509">
    <property type="entry name" value="UPF0102_YraN-like"/>
</dbReference>
<dbReference type="NCBIfam" id="NF009150">
    <property type="entry name" value="PRK12497.1-3"/>
    <property type="match status" value="1"/>
</dbReference>
<dbReference type="NCBIfam" id="NF009153">
    <property type="entry name" value="PRK12497.3-1"/>
    <property type="match status" value="1"/>
</dbReference>
<dbReference type="NCBIfam" id="NF009154">
    <property type="entry name" value="PRK12497.3-3"/>
    <property type="match status" value="1"/>
</dbReference>
<dbReference type="NCBIfam" id="TIGR00252">
    <property type="entry name" value="YraN family protein"/>
    <property type="match status" value="1"/>
</dbReference>
<dbReference type="PANTHER" id="PTHR34039">
    <property type="entry name" value="UPF0102 PROTEIN YRAN"/>
    <property type="match status" value="1"/>
</dbReference>
<dbReference type="PANTHER" id="PTHR34039:SF1">
    <property type="entry name" value="UPF0102 PROTEIN YRAN"/>
    <property type="match status" value="1"/>
</dbReference>
<dbReference type="Pfam" id="PF02021">
    <property type="entry name" value="UPF0102"/>
    <property type="match status" value="1"/>
</dbReference>
<dbReference type="SUPFAM" id="SSF52980">
    <property type="entry name" value="Restriction endonuclease-like"/>
    <property type="match status" value="1"/>
</dbReference>
<proteinExistence type="inferred from homology"/>
<comment type="similarity">
    <text evidence="1">Belongs to the UPF0102 family.</text>
</comment>
<feature type="chain" id="PRO_1000200154" description="UPF0102 protein JTY_2914">
    <location>
        <begin position="1"/>
        <end position="128"/>
    </location>
</feature>
<gene>
    <name type="ordered locus">JTY_2914</name>
</gene>